<evidence type="ECO:0000255" key="1">
    <source>
        <dbReference type="HAMAP-Rule" id="MF_00548"/>
    </source>
</evidence>
<protein>
    <recommendedName>
        <fullName evidence="1">Zinc transporter ZupT</fullName>
    </recommendedName>
</protein>
<organism>
    <name type="scientific">Xanthomonas campestris pv. campestris (strain ATCC 33913 / DSM 3586 / NCPPB 528 / LMG 568 / P 25)</name>
    <dbReference type="NCBI Taxonomy" id="190485"/>
    <lineage>
        <taxon>Bacteria</taxon>
        <taxon>Pseudomonadati</taxon>
        <taxon>Pseudomonadota</taxon>
        <taxon>Gammaproteobacteria</taxon>
        <taxon>Lysobacterales</taxon>
        <taxon>Lysobacteraceae</taxon>
        <taxon>Xanthomonas</taxon>
    </lineage>
</organism>
<comment type="function">
    <text evidence="1">Mediates zinc uptake. May also transport other divalent cations.</text>
</comment>
<comment type="catalytic activity">
    <reaction evidence="1">
        <text>Zn(2+)(in) = Zn(2+)(out)</text>
        <dbReference type="Rhea" id="RHEA:29351"/>
        <dbReference type="ChEBI" id="CHEBI:29105"/>
    </reaction>
</comment>
<comment type="subcellular location">
    <subcellularLocation>
        <location evidence="1">Cell inner membrane</location>
        <topology evidence="1">Multi-pass membrane protein</topology>
    </subcellularLocation>
</comment>
<comment type="similarity">
    <text evidence="1">Belongs to the ZIP transporter (TC 2.A.5) family. ZupT subfamily.</text>
</comment>
<accession>Q8P8Z6</accession>
<feature type="chain" id="PRO_0000207282" description="Zinc transporter ZupT">
    <location>
        <begin position="1"/>
        <end position="272"/>
    </location>
</feature>
<feature type="transmembrane region" description="Helical" evidence="1">
    <location>
        <begin position="12"/>
        <end position="32"/>
    </location>
</feature>
<feature type="transmembrane region" description="Helical" evidence="1">
    <location>
        <begin position="40"/>
        <end position="60"/>
    </location>
</feature>
<feature type="transmembrane region" description="Helical" evidence="1">
    <location>
        <begin position="76"/>
        <end position="96"/>
    </location>
</feature>
<feature type="transmembrane region" description="Helical" evidence="1">
    <location>
        <begin position="126"/>
        <end position="146"/>
    </location>
</feature>
<feature type="transmembrane region" description="Helical" evidence="1">
    <location>
        <begin position="158"/>
        <end position="178"/>
    </location>
</feature>
<feature type="transmembrane region" description="Helical" evidence="1">
    <location>
        <begin position="187"/>
        <end position="207"/>
    </location>
</feature>
<feature type="transmembrane region" description="Helical" evidence="1">
    <location>
        <begin position="211"/>
        <end position="231"/>
    </location>
</feature>
<feature type="transmembrane region" description="Helical" evidence="1">
    <location>
        <begin position="247"/>
        <end position="267"/>
    </location>
</feature>
<feature type="binding site" description="M2 metal binding site" evidence="1">
    <location>
        <position position="136"/>
    </location>
    <ligand>
        <name>Fe(2+)</name>
        <dbReference type="ChEBI" id="CHEBI:29033"/>
    </ligand>
</feature>
<feature type="binding site" description="M2 metal binding site" evidence="1">
    <location>
        <position position="139"/>
    </location>
    <ligand>
        <name>Fe(2+)</name>
        <dbReference type="ChEBI" id="CHEBI:29033"/>
    </ligand>
</feature>
<feature type="binding site" description="M1 metal binding site" evidence="1">
    <location>
        <position position="139"/>
    </location>
    <ligand>
        <name>Zn(2+)</name>
        <dbReference type="ChEBI" id="CHEBI:29105"/>
    </ligand>
</feature>
<feature type="binding site" description="M1 metal binding site" evidence="1">
    <location>
        <position position="164"/>
    </location>
    <ligand>
        <name>Zn(2+)</name>
        <dbReference type="ChEBI" id="CHEBI:29105"/>
    </ligand>
</feature>
<feature type="binding site" description="M2 metal binding site" evidence="1">
    <location>
        <position position="165"/>
    </location>
    <ligand>
        <name>Fe(2+)</name>
        <dbReference type="ChEBI" id="CHEBI:29033"/>
    </ligand>
</feature>
<feature type="binding site" description="M2 metal binding site" evidence="1">
    <location>
        <position position="168"/>
    </location>
    <ligand>
        <name>Fe(2+)</name>
        <dbReference type="ChEBI" id="CHEBI:29033"/>
    </ligand>
</feature>
<feature type="binding site" description="M1 metal binding site" evidence="1">
    <location>
        <position position="168"/>
    </location>
    <ligand>
        <name>Zn(2+)</name>
        <dbReference type="ChEBI" id="CHEBI:29105"/>
    </ligand>
</feature>
<feature type="binding site" description="M2 metal binding site" evidence="1">
    <location>
        <position position="197"/>
    </location>
    <ligand>
        <name>Fe(2+)</name>
        <dbReference type="ChEBI" id="CHEBI:29033"/>
    </ligand>
</feature>
<reference key="1">
    <citation type="journal article" date="2002" name="Nature">
        <title>Comparison of the genomes of two Xanthomonas pathogens with differing host specificities.</title>
        <authorList>
            <person name="da Silva A.C.R."/>
            <person name="Ferro J.A."/>
            <person name="Reinach F.C."/>
            <person name="Farah C.S."/>
            <person name="Furlan L.R."/>
            <person name="Quaggio R.B."/>
            <person name="Monteiro-Vitorello C.B."/>
            <person name="Van Sluys M.A."/>
            <person name="Almeida N.F. Jr."/>
            <person name="Alves L.M.C."/>
            <person name="do Amaral A.M."/>
            <person name="Bertolini M.C."/>
            <person name="Camargo L.E.A."/>
            <person name="Camarotte G."/>
            <person name="Cannavan F."/>
            <person name="Cardozo J."/>
            <person name="Chambergo F."/>
            <person name="Ciapina L.P."/>
            <person name="Cicarelli R.M.B."/>
            <person name="Coutinho L.L."/>
            <person name="Cursino-Santos J.R."/>
            <person name="El-Dorry H."/>
            <person name="Faria J.B."/>
            <person name="Ferreira A.J.S."/>
            <person name="Ferreira R.C.C."/>
            <person name="Ferro M.I.T."/>
            <person name="Formighieri E.F."/>
            <person name="Franco M.C."/>
            <person name="Greggio C.C."/>
            <person name="Gruber A."/>
            <person name="Katsuyama A.M."/>
            <person name="Kishi L.T."/>
            <person name="Leite R.P."/>
            <person name="Lemos E.G.M."/>
            <person name="Lemos M.V.F."/>
            <person name="Locali E.C."/>
            <person name="Machado M.A."/>
            <person name="Madeira A.M.B.N."/>
            <person name="Martinez-Rossi N.M."/>
            <person name="Martins E.C."/>
            <person name="Meidanis J."/>
            <person name="Menck C.F.M."/>
            <person name="Miyaki C.Y."/>
            <person name="Moon D.H."/>
            <person name="Moreira L.M."/>
            <person name="Novo M.T.M."/>
            <person name="Okura V.K."/>
            <person name="Oliveira M.C."/>
            <person name="Oliveira V.R."/>
            <person name="Pereira H.A."/>
            <person name="Rossi A."/>
            <person name="Sena J.A.D."/>
            <person name="Silva C."/>
            <person name="de Souza R.F."/>
            <person name="Spinola L.A.F."/>
            <person name="Takita M.A."/>
            <person name="Tamura R.E."/>
            <person name="Teixeira E.C."/>
            <person name="Tezza R.I.D."/>
            <person name="Trindade dos Santos M."/>
            <person name="Truffi D."/>
            <person name="Tsai S.M."/>
            <person name="White F.F."/>
            <person name="Setubal J.C."/>
            <person name="Kitajima J.P."/>
        </authorList>
    </citation>
    <scope>NUCLEOTIDE SEQUENCE [LARGE SCALE GENOMIC DNA]</scope>
    <source>
        <strain>ATCC 33913 / DSM 3586 / NCPPB 528 / LMG 568 / P 25</strain>
    </source>
</reference>
<gene>
    <name evidence="1" type="primary">zupT</name>
    <name type="ordered locus">XCC2082</name>
</gene>
<keyword id="KW-0997">Cell inner membrane</keyword>
<keyword id="KW-1003">Cell membrane</keyword>
<keyword id="KW-0406">Ion transport</keyword>
<keyword id="KW-0408">Iron</keyword>
<keyword id="KW-0472">Membrane</keyword>
<keyword id="KW-0479">Metal-binding</keyword>
<keyword id="KW-1185">Reference proteome</keyword>
<keyword id="KW-0812">Transmembrane</keyword>
<keyword id="KW-1133">Transmembrane helix</keyword>
<keyword id="KW-0813">Transport</keyword>
<keyword id="KW-0862">Zinc</keyword>
<keyword id="KW-0864">Zinc transport</keyword>
<proteinExistence type="inferred from homology"/>
<dbReference type="EMBL" id="AE008922">
    <property type="protein sequence ID" value="AAM41371.1"/>
    <property type="molecule type" value="Genomic_DNA"/>
</dbReference>
<dbReference type="RefSeq" id="NP_637447.1">
    <property type="nucleotide sequence ID" value="NC_003902.1"/>
</dbReference>
<dbReference type="RefSeq" id="WP_011037238.1">
    <property type="nucleotide sequence ID" value="NC_003902.1"/>
</dbReference>
<dbReference type="SMR" id="Q8P8Z6"/>
<dbReference type="STRING" id="190485.XCC2082"/>
<dbReference type="EnsemblBacteria" id="AAM41371">
    <property type="protein sequence ID" value="AAM41371"/>
    <property type="gene ID" value="XCC2082"/>
</dbReference>
<dbReference type="KEGG" id="xcc:XCC2082"/>
<dbReference type="PATRIC" id="fig|190485.4.peg.2229"/>
<dbReference type="eggNOG" id="COG0428">
    <property type="taxonomic scope" value="Bacteria"/>
</dbReference>
<dbReference type="HOGENOM" id="CLU_015114_1_3_6"/>
<dbReference type="OrthoDB" id="9787346at2"/>
<dbReference type="Proteomes" id="UP000001010">
    <property type="component" value="Chromosome"/>
</dbReference>
<dbReference type="GO" id="GO:0016020">
    <property type="term" value="C:membrane"/>
    <property type="evidence" value="ECO:0000318"/>
    <property type="project" value="GO_Central"/>
</dbReference>
<dbReference type="GO" id="GO:0005886">
    <property type="term" value="C:plasma membrane"/>
    <property type="evidence" value="ECO:0007669"/>
    <property type="project" value="UniProtKB-SubCell"/>
</dbReference>
<dbReference type="GO" id="GO:0046872">
    <property type="term" value="F:metal ion binding"/>
    <property type="evidence" value="ECO:0007669"/>
    <property type="project" value="UniProtKB-KW"/>
</dbReference>
<dbReference type="GO" id="GO:0005385">
    <property type="term" value="F:zinc ion transmembrane transporter activity"/>
    <property type="evidence" value="ECO:0000318"/>
    <property type="project" value="GO_Central"/>
</dbReference>
<dbReference type="GO" id="GO:0071577">
    <property type="term" value="P:zinc ion transmembrane transport"/>
    <property type="evidence" value="ECO:0000318"/>
    <property type="project" value="GO_Central"/>
</dbReference>
<dbReference type="HAMAP" id="MF_00548">
    <property type="entry name" value="ZupT"/>
    <property type="match status" value="1"/>
</dbReference>
<dbReference type="InterPro" id="IPR003689">
    <property type="entry name" value="ZIP"/>
</dbReference>
<dbReference type="InterPro" id="IPR023498">
    <property type="entry name" value="Zn_transptr_ZupT"/>
</dbReference>
<dbReference type="NCBIfam" id="NF003243">
    <property type="entry name" value="PRK04201.1"/>
    <property type="match status" value="1"/>
</dbReference>
<dbReference type="PANTHER" id="PTHR11040:SF205">
    <property type="entry name" value="ZINC TRANSPORTER ZUPT"/>
    <property type="match status" value="1"/>
</dbReference>
<dbReference type="PANTHER" id="PTHR11040">
    <property type="entry name" value="ZINC/IRON TRANSPORTER"/>
    <property type="match status" value="1"/>
</dbReference>
<dbReference type="Pfam" id="PF02535">
    <property type="entry name" value="Zip"/>
    <property type="match status" value="1"/>
</dbReference>
<name>ZUPT_XANCP</name>
<sequence length="272" mass="28651">MLEVSSHNVWTALAVTLAAGLATGLGSLMVVFAKKPNPRLLAFGLAFAGGAMVFVSLSEILNKSIASFSNAYNDKLGFTYGTLTFLGGMLLIMVIDRLVPNPHQSLSTDDPQFRDDNRAYIRRVGLLTAVAITAHNFPEGLATFFATLESPAVGMPLAFAIAIHNIPEGIAIAVPVYFATRNKFYAFGASLLSGLAEPIGAGIGYLLLSSVLSEAVFGAVFGVIAGVMVFLALDELLPAAKRYAQGHETVYGLVSGMGTLAISLVLFRYAAP</sequence>